<name>NDUB4_PONPY</name>
<feature type="initiator methionine" description="Removed" evidence="2">
    <location>
        <position position="1"/>
    </location>
</feature>
<feature type="chain" id="PRO_0000389103" description="NADH dehydrogenase [ubiquinone] 1 beta subcomplex subunit 4">
    <location>
        <begin position="2"/>
        <end position="129"/>
    </location>
</feature>
<feature type="transmembrane region" description="Helical" evidence="3">
    <location>
        <begin position="88"/>
        <end position="105"/>
    </location>
</feature>
<feature type="region of interest" description="Disordered" evidence="4">
    <location>
        <begin position="1"/>
        <end position="26"/>
    </location>
</feature>
<feature type="modified residue" description="N-acetylserine" evidence="2">
    <location>
        <position position="2"/>
    </location>
</feature>
<feature type="modified residue" description="Phosphoserine" evidence="1">
    <location>
        <position position="26"/>
    </location>
</feature>
<keyword id="KW-0007">Acetylation</keyword>
<keyword id="KW-0249">Electron transport</keyword>
<keyword id="KW-0472">Membrane</keyword>
<keyword id="KW-0496">Mitochondrion</keyword>
<keyword id="KW-0999">Mitochondrion inner membrane</keyword>
<keyword id="KW-0597">Phosphoprotein</keyword>
<keyword id="KW-0679">Respiratory chain</keyword>
<keyword id="KW-0812">Transmembrane</keyword>
<keyword id="KW-1133">Transmembrane helix</keyword>
<keyword id="KW-0813">Transport</keyword>
<accession>P0CB71</accession>
<accession>Q0MQD3</accession>
<accession>Q5R6P3</accession>
<sequence length="129" mass="15244">MSFPKYKPSRLSPLPETLDPAEYNISPETRRAQAERLAIRAQLKREYLLQYNDPNRRGLIENPALLRWAYARTTNVYPNFRPTPKNSLMGALYGFGPLIFIYYIIKTERDRKEKLIQEGKLDRTFQLSY</sequence>
<protein>
    <recommendedName>
        <fullName>NADH dehydrogenase [ubiquinone] 1 beta subcomplex subunit 4</fullName>
    </recommendedName>
    <alternativeName>
        <fullName>Complex I-B15</fullName>
        <shortName>CI-B15</shortName>
    </alternativeName>
    <alternativeName>
        <fullName>NADH-ubiquinone oxidoreductase B15 subunit</fullName>
    </alternativeName>
</protein>
<evidence type="ECO:0000250" key="1">
    <source>
        <dbReference type="UniProtKB" id="O95168"/>
    </source>
</evidence>
<evidence type="ECO:0000250" key="2">
    <source>
        <dbReference type="UniProtKB" id="P48305"/>
    </source>
</evidence>
<evidence type="ECO:0000255" key="3"/>
<evidence type="ECO:0000256" key="4">
    <source>
        <dbReference type="SAM" id="MobiDB-lite"/>
    </source>
</evidence>
<evidence type="ECO:0000305" key="5"/>
<comment type="function">
    <text evidence="1">Accessory subunit of the mitochondrial membrane respiratory chain NADH dehydrogenase (Complex I), that is believed not to be involved in catalysis. Complex I functions in the transfer of electrons from NADH to the respiratory chain. The immediate electron acceptor for the enzyme is believed to be ubiquinone.</text>
</comment>
<comment type="subunit">
    <text evidence="1">Complex I is composed of 45 different subunits.</text>
</comment>
<comment type="subcellular location">
    <subcellularLocation>
        <location evidence="1">Mitochondrion inner membrane</location>
        <topology evidence="3">Single-pass membrane protein</topology>
        <orientation evidence="1">Matrix side</orientation>
    </subcellularLocation>
</comment>
<comment type="similarity">
    <text evidence="5">Belongs to the complex I NDUFB4 subunit family.</text>
</comment>
<dbReference type="EMBL" id="CR860443">
    <property type="protein sequence ID" value="CAH92567.1"/>
    <property type="molecule type" value="mRNA"/>
</dbReference>
<dbReference type="SMR" id="P0CB71"/>
<dbReference type="KEGG" id="pon:100173492"/>
<dbReference type="GO" id="GO:0005743">
    <property type="term" value="C:mitochondrial inner membrane"/>
    <property type="evidence" value="ECO:0007669"/>
    <property type="project" value="UniProtKB-SubCell"/>
</dbReference>
<dbReference type="GO" id="GO:0045271">
    <property type="term" value="C:respiratory chain complex I"/>
    <property type="evidence" value="ECO:0000250"/>
    <property type="project" value="UniProtKB"/>
</dbReference>
<dbReference type="InterPro" id="IPR009866">
    <property type="entry name" value="NADH_UbQ_OxRdtase_NDUFB4_su"/>
</dbReference>
<dbReference type="PANTHER" id="PTHR15469:SF1">
    <property type="entry name" value="NADH DEHYDROGENASE [UBIQUINONE] 1 BETA SUBCOMPLEX SUBUNIT 4"/>
    <property type="match status" value="1"/>
</dbReference>
<dbReference type="PANTHER" id="PTHR15469">
    <property type="entry name" value="NADH-UBIQUINONE OXIDOREDUCTASE B15 SUBUNIT"/>
    <property type="match status" value="1"/>
</dbReference>
<dbReference type="Pfam" id="PF07225">
    <property type="entry name" value="NDUF_B4"/>
    <property type="match status" value="1"/>
</dbReference>
<proteinExistence type="evidence at transcript level"/>
<organism>
    <name type="scientific">Pongo pygmaeus</name>
    <name type="common">Bornean orangutan</name>
    <dbReference type="NCBI Taxonomy" id="9600"/>
    <lineage>
        <taxon>Eukaryota</taxon>
        <taxon>Metazoa</taxon>
        <taxon>Chordata</taxon>
        <taxon>Craniata</taxon>
        <taxon>Vertebrata</taxon>
        <taxon>Euteleostomi</taxon>
        <taxon>Mammalia</taxon>
        <taxon>Eutheria</taxon>
        <taxon>Euarchontoglires</taxon>
        <taxon>Primates</taxon>
        <taxon>Haplorrhini</taxon>
        <taxon>Catarrhini</taxon>
        <taxon>Hominidae</taxon>
        <taxon>Pongo</taxon>
    </lineage>
</organism>
<gene>
    <name type="primary">NDUFB4</name>
</gene>
<reference key="1">
    <citation type="submission" date="2004-11" db="EMBL/GenBank/DDBJ databases">
        <authorList>
            <consortium name="The German cDNA consortium"/>
        </authorList>
    </citation>
    <scope>NUCLEOTIDE SEQUENCE [LARGE SCALE MRNA]</scope>
    <source>
        <tissue>Brain cortex</tissue>
    </source>
</reference>